<dbReference type="EC" id="1.1.1.27" evidence="2"/>
<dbReference type="EMBL" id="L43525">
    <property type="protein sequence ID" value="AAA99462.1"/>
    <property type="molecule type" value="mRNA"/>
</dbReference>
<dbReference type="RefSeq" id="NP_001296844.1">
    <property type="nucleotide sequence ID" value="NM_001309915.1"/>
</dbReference>
<dbReference type="RefSeq" id="XP_012708710.1">
    <property type="nucleotide sequence ID" value="XM_012853256.1"/>
</dbReference>
<dbReference type="SMR" id="Q92055"/>
<dbReference type="STRING" id="8078.ENSFHEP00000008914"/>
<dbReference type="GeneID" id="105918221"/>
<dbReference type="CTD" id="3939"/>
<dbReference type="OrthoDB" id="5405561at2759"/>
<dbReference type="UniPathway" id="UPA00554">
    <property type="reaction ID" value="UER00611"/>
</dbReference>
<dbReference type="Proteomes" id="UP000265000">
    <property type="component" value="Whole Genome Shotgun Assembly"/>
</dbReference>
<dbReference type="GO" id="GO:0005737">
    <property type="term" value="C:cytoplasm"/>
    <property type="evidence" value="ECO:0007669"/>
    <property type="project" value="UniProtKB-SubCell"/>
</dbReference>
<dbReference type="GO" id="GO:0004459">
    <property type="term" value="F:L-lactate dehydrogenase activity"/>
    <property type="evidence" value="ECO:0007669"/>
    <property type="project" value="UniProtKB-EC"/>
</dbReference>
<dbReference type="GO" id="GO:0006089">
    <property type="term" value="P:lactate metabolic process"/>
    <property type="evidence" value="ECO:0007669"/>
    <property type="project" value="TreeGrafter"/>
</dbReference>
<dbReference type="CDD" id="cd05293">
    <property type="entry name" value="LDH_1"/>
    <property type="match status" value="1"/>
</dbReference>
<dbReference type="FunFam" id="3.40.50.720:FF:000029">
    <property type="entry name" value="L-lactate dehydrogenase A chain"/>
    <property type="match status" value="1"/>
</dbReference>
<dbReference type="FunFam" id="3.90.110.10:FF:000003">
    <property type="entry name" value="L-lactate dehydrogenase A chain"/>
    <property type="match status" value="1"/>
</dbReference>
<dbReference type="Gene3D" id="3.90.110.10">
    <property type="entry name" value="Lactate dehydrogenase/glycoside hydrolase, family 4, C-terminal"/>
    <property type="match status" value="1"/>
</dbReference>
<dbReference type="Gene3D" id="3.40.50.720">
    <property type="entry name" value="NAD(P)-binding Rossmann-like Domain"/>
    <property type="match status" value="1"/>
</dbReference>
<dbReference type="HAMAP" id="MF_00488">
    <property type="entry name" value="Lactate_dehydrog"/>
    <property type="match status" value="1"/>
</dbReference>
<dbReference type="InterPro" id="IPR001557">
    <property type="entry name" value="L-lactate/malate_DH"/>
</dbReference>
<dbReference type="InterPro" id="IPR011304">
    <property type="entry name" value="L-lactate_DH"/>
</dbReference>
<dbReference type="InterPro" id="IPR018177">
    <property type="entry name" value="L-lactate_DH_AS"/>
</dbReference>
<dbReference type="InterPro" id="IPR022383">
    <property type="entry name" value="Lactate/malate_DH_C"/>
</dbReference>
<dbReference type="InterPro" id="IPR001236">
    <property type="entry name" value="Lactate/malate_DH_N"/>
</dbReference>
<dbReference type="InterPro" id="IPR015955">
    <property type="entry name" value="Lactate_DH/Glyco_Ohase_4_C"/>
</dbReference>
<dbReference type="InterPro" id="IPR036291">
    <property type="entry name" value="NAD(P)-bd_dom_sf"/>
</dbReference>
<dbReference type="NCBIfam" id="TIGR01771">
    <property type="entry name" value="L-LDH-NAD"/>
    <property type="match status" value="1"/>
</dbReference>
<dbReference type="NCBIfam" id="NF000824">
    <property type="entry name" value="PRK00066.1"/>
    <property type="match status" value="1"/>
</dbReference>
<dbReference type="PANTHER" id="PTHR43128">
    <property type="entry name" value="L-2-HYDROXYCARBOXYLATE DEHYDROGENASE (NAD(P)(+))"/>
    <property type="match status" value="1"/>
</dbReference>
<dbReference type="PANTHER" id="PTHR43128:SF10">
    <property type="entry name" value="L-LACTATE DEHYDROGENASE A CHAIN"/>
    <property type="match status" value="1"/>
</dbReference>
<dbReference type="Pfam" id="PF02866">
    <property type="entry name" value="Ldh_1_C"/>
    <property type="match status" value="1"/>
</dbReference>
<dbReference type="Pfam" id="PF00056">
    <property type="entry name" value="Ldh_1_N"/>
    <property type="match status" value="1"/>
</dbReference>
<dbReference type="PIRSF" id="PIRSF000102">
    <property type="entry name" value="Lac_mal_DH"/>
    <property type="match status" value="1"/>
</dbReference>
<dbReference type="PRINTS" id="PR00086">
    <property type="entry name" value="LLDHDRGNASE"/>
</dbReference>
<dbReference type="SUPFAM" id="SSF56327">
    <property type="entry name" value="LDH C-terminal domain-like"/>
    <property type="match status" value="1"/>
</dbReference>
<dbReference type="SUPFAM" id="SSF51735">
    <property type="entry name" value="NAD(P)-binding Rossmann-fold domains"/>
    <property type="match status" value="1"/>
</dbReference>
<dbReference type="PROSITE" id="PS00064">
    <property type="entry name" value="L_LDH"/>
    <property type="match status" value="1"/>
</dbReference>
<comment type="function">
    <text evidence="2">Interconverts simultaneously and stereospecifically pyruvate and lactate with concomitant interconversion of NADH and NAD(+).</text>
</comment>
<comment type="catalytic activity">
    <reaction evidence="2">
        <text>(S)-lactate + NAD(+) = pyruvate + NADH + H(+)</text>
        <dbReference type="Rhea" id="RHEA:23444"/>
        <dbReference type="ChEBI" id="CHEBI:15361"/>
        <dbReference type="ChEBI" id="CHEBI:15378"/>
        <dbReference type="ChEBI" id="CHEBI:16651"/>
        <dbReference type="ChEBI" id="CHEBI:57540"/>
        <dbReference type="ChEBI" id="CHEBI:57945"/>
        <dbReference type="EC" id="1.1.1.27"/>
    </reaction>
    <physiologicalReaction direction="left-to-right" evidence="2">
        <dbReference type="Rhea" id="RHEA:23445"/>
    </physiologicalReaction>
    <physiologicalReaction direction="right-to-left" evidence="2">
        <dbReference type="Rhea" id="RHEA:23446"/>
    </physiologicalReaction>
</comment>
<comment type="pathway">
    <text evidence="2">Fermentation; pyruvate fermentation to lactate; (S)-lactate from pyruvate: step 1/1.</text>
</comment>
<comment type="subunit">
    <text evidence="1">Homotetramer.</text>
</comment>
<comment type="subcellular location">
    <subcellularLocation>
        <location evidence="1">Cytoplasm</location>
    </subcellularLocation>
</comment>
<comment type="similarity">
    <text evidence="3">Belongs to the LDH/MDH superfamily. LDH family.</text>
</comment>
<keyword id="KW-0963">Cytoplasm</keyword>
<keyword id="KW-0520">NAD</keyword>
<keyword id="KW-0560">Oxidoreductase</keyword>
<feature type="initiator methionine" description="Removed" evidence="1">
    <location>
        <position position="1"/>
    </location>
</feature>
<feature type="chain" id="PRO_0000168438" description="L-lactate dehydrogenase A chain">
    <location>
        <begin position="2"/>
        <end position="332"/>
    </location>
</feature>
<feature type="active site" description="Proton acceptor" evidence="1">
    <location>
        <position position="193"/>
    </location>
</feature>
<feature type="binding site" evidence="1">
    <location>
        <begin position="29"/>
        <end position="57"/>
    </location>
    <ligand>
        <name>NAD(+)</name>
        <dbReference type="ChEBI" id="CHEBI:57540"/>
    </ligand>
</feature>
<feature type="binding site" evidence="1">
    <location>
        <position position="99"/>
    </location>
    <ligand>
        <name>NAD(+)</name>
        <dbReference type="ChEBI" id="CHEBI:57540"/>
    </ligand>
</feature>
<feature type="binding site" evidence="1">
    <location>
        <position position="106"/>
    </location>
    <ligand>
        <name>substrate</name>
    </ligand>
</feature>
<feature type="binding site" evidence="1">
    <location>
        <position position="138"/>
    </location>
    <ligand>
        <name>NAD(+)</name>
        <dbReference type="ChEBI" id="CHEBI:57540"/>
    </ligand>
</feature>
<feature type="binding site" evidence="1">
    <location>
        <position position="138"/>
    </location>
    <ligand>
        <name>substrate</name>
    </ligand>
</feature>
<feature type="binding site" evidence="1">
    <location>
        <position position="169"/>
    </location>
    <ligand>
        <name>substrate</name>
    </ligand>
</feature>
<feature type="binding site" evidence="1">
    <location>
        <position position="248"/>
    </location>
    <ligand>
        <name>substrate</name>
    </ligand>
</feature>
<evidence type="ECO:0000250" key="1"/>
<evidence type="ECO:0000250" key="2">
    <source>
        <dbReference type="UniProtKB" id="P00338"/>
    </source>
</evidence>
<evidence type="ECO:0000305" key="3"/>
<gene>
    <name type="primary">ldha</name>
</gene>
<organism>
    <name type="scientific">Fundulus heteroclitus</name>
    <name type="common">Killifish</name>
    <name type="synonym">Mummichog</name>
    <dbReference type="NCBI Taxonomy" id="8078"/>
    <lineage>
        <taxon>Eukaryota</taxon>
        <taxon>Metazoa</taxon>
        <taxon>Chordata</taxon>
        <taxon>Craniata</taxon>
        <taxon>Vertebrata</taxon>
        <taxon>Euteleostomi</taxon>
        <taxon>Actinopterygii</taxon>
        <taxon>Neopterygii</taxon>
        <taxon>Teleostei</taxon>
        <taxon>Neoteleostei</taxon>
        <taxon>Acanthomorphata</taxon>
        <taxon>Ovalentaria</taxon>
        <taxon>Atherinomorphae</taxon>
        <taxon>Cyprinodontiformes</taxon>
        <taxon>Fundulidae</taxon>
        <taxon>Fundulus</taxon>
    </lineage>
</organism>
<sequence>MSTQEKLISHVMKEEPVGCRNKVTVVGVGMVGMASAISVLLKDLCDELALVDVMEDKLKGEAMDLQHGALFLKTHKIVADKDYSVTANSKVVVVTAGARQQEGESRLNLVQRNVNIFKFIIPNIVKYSPNCILLVVSNPVDILTYVAWKLSGFPRHRVIGSGTNLDSARFRHLMGEKFHLHPSSCHGWIVGEHGDSSVAVWSGVNIAGVSLQTLNPNMGADGDSENWKELHKKVVDGAYEVIKLKGYTSWAIGMSVADLVESIVKNLHKVHPVSTLVQGMHGVKDEVFLSIPCVLGNSGLTDVIHMTLKPEEEKQLVKSAETLWGVQKELTL</sequence>
<name>LDHA_FUNHE</name>
<protein>
    <recommendedName>
        <fullName>L-lactate dehydrogenase A chain</fullName>
        <shortName>LDH-A</shortName>
        <ecNumber evidence="2">1.1.1.27</ecNumber>
    </recommendedName>
    <alternativeName>
        <fullName>LDH-M</fullName>
    </alternativeName>
</protein>
<accession>Q92055</accession>
<proteinExistence type="evidence at transcript level"/>
<reference key="1">
    <citation type="journal article" date="1995" name="Mol. Mar. Biol. Biotechnol.">
        <title>Evolutionary relations among vertebrate muscle-type lactate dehydrogenases.</title>
        <authorList>
            <person name="Quattro J.M."/>
            <person name="Pollock D.D."/>
            <person name="Powell M."/>
            <person name="Woods H.A."/>
            <person name="Powers D.A."/>
        </authorList>
    </citation>
    <scope>NUCLEOTIDE SEQUENCE [MRNA]</scope>
    <source>
        <tissue>Muscle</tissue>
    </source>
</reference>